<protein>
    <recommendedName>
        <fullName evidence="1">Large ribosomal subunit protein bL20</fullName>
    </recommendedName>
    <alternativeName>
        <fullName evidence="2">50S ribosomal protein L20</fullName>
    </alternativeName>
</protein>
<comment type="function">
    <text evidence="1">Binds directly to 23S ribosomal RNA and is necessary for the in vitro assembly process of the 50S ribosomal subunit. It is not involved in the protein synthesizing functions of that subunit.</text>
</comment>
<comment type="similarity">
    <text evidence="1">Belongs to the bacterial ribosomal protein bL20 family.</text>
</comment>
<accession>B3WF43</accession>
<organism>
    <name type="scientific">Lacticaseibacillus casei (strain BL23)</name>
    <name type="common">Lactobacillus casei</name>
    <dbReference type="NCBI Taxonomy" id="543734"/>
    <lineage>
        <taxon>Bacteria</taxon>
        <taxon>Bacillati</taxon>
        <taxon>Bacillota</taxon>
        <taxon>Bacilli</taxon>
        <taxon>Lactobacillales</taxon>
        <taxon>Lactobacillaceae</taxon>
        <taxon>Lacticaseibacillus</taxon>
    </lineage>
</organism>
<keyword id="KW-0687">Ribonucleoprotein</keyword>
<keyword id="KW-0689">Ribosomal protein</keyword>
<keyword id="KW-0694">RNA-binding</keyword>
<keyword id="KW-0699">rRNA-binding</keyword>
<feature type="chain" id="PRO_1000122330" description="Large ribosomal subunit protein bL20">
    <location>
        <begin position="1"/>
        <end position="118"/>
    </location>
</feature>
<sequence length="118" mass="13422">MPRVKGGTVTRKRRKKVLKLAKGYRGAKHLLFKAANAQVMVSYRYAFRDRRAKKRDFRRLWIARINAAARMNDISYSKLMHGLKVANVDMNRKMLADLAVSDPDGFKAVADTAKKALA</sequence>
<gene>
    <name evidence="1" type="primary">rplT</name>
    <name type="ordered locus">LCABL_19150</name>
</gene>
<evidence type="ECO:0000255" key="1">
    <source>
        <dbReference type="HAMAP-Rule" id="MF_00382"/>
    </source>
</evidence>
<evidence type="ECO:0000305" key="2"/>
<reference key="1">
    <citation type="submission" date="2008-06" db="EMBL/GenBank/DDBJ databases">
        <title>Lactobacillus casei BL23 complete genome sequence.</title>
        <authorList>
            <person name="Maze A."/>
            <person name="Boel G."/>
            <person name="Bourand A."/>
            <person name="Loux V."/>
            <person name="Gibrat J.F."/>
            <person name="Zuniga M."/>
            <person name="Hartke A."/>
            <person name="Deutscher J."/>
        </authorList>
    </citation>
    <scope>NUCLEOTIDE SEQUENCE [LARGE SCALE GENOMIC DNA]</scope>
    <source>
        <strain>BL23</strain>
    </source>
</reference>
<name>RL20_LACCB</name>
<proteinExistence type="inferred from homology"/>
<dbReference type="EMBL" id="FM177140">
    <property type="protein sequence ID" value="CAQ66994.1"/>
    <property type="molecule type" value="Genomic_DNA"/>
</dbReference>
<dbReference type="SMR" id="B3WF43"/>
<dbReference type="KEGG" id="lcb:LCABL_19150"/>
<dbReference type="HOGENOM" id="CLU_123265_0_1_9"/>
<dbReference type="GO" id="GO:1990904">
    <property type="term" value="C:ribonucleoprotein complex"/>
    <property type="evidence" value="ECO:0007669"/>
    <property type="project" value="UniProtKB-KW"/>
</dbReference>
<dbReference type="GO" id="GO:0005840">
    <property type="term" value="C:ribosome"/>
    <property type="evidence" value="ECO:0007669"/>
    <property type="project" value="UniProtKB-KW"/>
</dbReference>
<dbReference type="GO" id="GO:0019843">
    <property type="term" value="F:rRNA binding"/>
    <property type="evidence" value="ECO:0007669"/>
    <property type="project" value="UniProtKB-UniRule"/>
</dbReference>
<dbReference type="GO" id="GO:0003735">
    <property type="term" value="F:structural constituent of ribosome"/>
    <property type="evidence" value="ECO:0007669"/>
    <property type="project" value="InterPro"/>
</dbReference>
<dbReference type="GO" id="GO:0000027">
    <property type="term" value="P:ribosomal large subunit assembly"/>
    <property type="evidence" value="ECO:0007669"/>
    <property type="project" value="UniProtKB-UniRule"/>
</dbReference>
<dbReference type="GO" id="GO:0006412">
    <property type="term" value="P:translation"/>
    <property type="evidence" value="ECO:0007669"/>
    <property type="project" value="InterPro"/>
</dbReference>
<dbReference type="CDD" id="cd07026">
    <property type="entry name" value="Ribosomal_L20"/>
    <property type="match status" value="1"/>
</dbReference>
<dbReference type="FunFam" id="1.10.1900.20:FF:000001">
    <property type="entry name" value="50S ribosomal protein L20"/>
    <property type="match status" value="1"/>
</dbReference>
<dbReference type="Gene3D" id="6.10.160.10">
    <property type="match status" value="1"/>
</dbReference>
<dbReference type="Gene3D" id="1.10.1900.20">
    <property type="entry name" value="Ribosomal protein L20"/>
    <property type="match status" value="1"/>
</dbReference>
<dbReference type="HAMAP" id="MF_00382">
    <property type="entry name" value="Ribosomal_bL20"/>
    <property type="match status" value="1"/>
</dbReference>
<dbReference type="InterPro" id="IPR005813">
    <property type="entry name" value="Ribosomal_bL20"/>
</dbReference>
<dbReference type="InterPro" id="IPR049946">
    <property type="entry name" value="RIBOSOMAL_L20_CS"/>
</dbReference>
<dbReference type="InterPro" id="IPR035566">
    <property type="entry name" value="Ribosomal_protein_bL20_C"/>
</dbReference>
<dbReference type="NCBIfam" id="TIGR01032">
    <property type="entry name" value="rplT_bact"/>
    <property type="match status" value="1"/>
</dbReference>
<dbReference type="PANTHER" id="PTHR10986">
    <property type="entry name" value="39S RIBOSOMAL PROTEIN L20"/>
    <property type="match status" value="1"/>
</dbReference>
<dbReference type="Pfam" id="PF00453">
    <property type="entry name" value="Ribosomal_L20"/>
    <property type="match status" value="1"/>
</dbReference>
<dbReference type="PRINTS" id="PR00062">
    <property type="entry name" value="RIBOSOMALL20"/>
</dbReference>
<dbReference type="SUPFAM" id="SSF74731">
    <property type="entry name" value="Ribosomal protein L20"/>
    <property type="match status" value="1"/>
</dbReference>
<dbReference type="PROSITE" id="PS00937">
    <property type="entry name" value="RIBOSOMAL_L20"/>
    <property type="match status" value="1"/>
</dbReference>